<sequence>MAKHSQHSSPPRKLFDTLNDLWQRAKSEAGLSAEGPEGTRRRNNLILYLLLVLSTLYLLNGYQTLRNEEIPYSEFLKAVAEGRVEQAVVTEQTISGTLKPEAEGESTRPFITVPLWNHELAAELEKKGVKYTVRYGSNWFSSLIFNWIVPIVLLTLFWTWMARRMTGGRGFLSIGKKTRIQADTAAKVTFGDVAGADEAKQELRETIEFLQNPTRIQSLGGRMPKGVLLVGPPGTGKTLLARAVAGEAGVPFFNISGSEFIELFVGVGAARVRDLFEQARQNAPCIIFIDELDAIGRSRGGPVVMGGHDEREQTLNQLLTEMDGFDPSVGVAVMAATNRPEILDKALLRSGRFDRQIVVDKPGLEDRVSILKLHTRKMKLAADVDLRVVAQRTPGFVGADLANAANEAAIIAVRANKAAIGMADFEAAIDRILAGPEKKSRLLNDAEKHRVAVHESGHALVAEIVPTGQPVHKVSIIPRGAAALGFTLQLPVEEKFLSTEQELKDQIAILLGGRTAEELVFGESSSGAQNDLEKASEIARTMVCSLGMSKVLGPLTYGRRQQLAYLSVEGAEERNFSEETARLIDNEVRKLIEEGLQRVREILTHHRVTLDRLAALLREKEVVSGEDVKAVIREAAS</sequence>
<dbReference type="EC" id="3.4.24.-" evidence="1"/>
<dbReference type="EMBL" id="AE017282">
    <property type="protein sequence ID" value="AAU93048.1"/>
    <property type="molecule type" value="Genomic_DNA"/>
</dbReference>
<dbReference type="RefSeq" id="WP_010960172.1">
    <property type="nucleotide sequence ID" value="NC_002977.6"/>
</dbReference>
<dbReference type="SMR" id="Q60AK1"/>
<dbReference type="STRING" id="243233.MCA0851"/>
<dbReference type="MEROPS" id="M41.021"/>
<dbReference type="GeneID" id="88223159"/>
<dbReference type="KEGG" id="mca:MCA0851"/>
<dbReference type="eggNOG" id="COG0465">
    <property type="taxonomic scope" value="Bacteria"/>
</dbReference>
<dbReference type="HOGENOM" id="CLU_000688_16_1_6"/>
<dbReference type="Proteomes" id="UP000006821">
    <property type="component" value="Chromosome"/>
</dbReference>
<dbReference type="GO" id="GO:0005886">
    <property type="term" value="C:plasma membrane"/>
    <property type="evidence" value="ECO:0007669"/>
    <property type="project" value="UniProtKB-SubCell"/>
</dbReference>
<dbReference type="GO" id="GO:0005524">
    <property type="term" value="F:ATP binding"/>
    <property type="evidence" value="ECO:0007669"/>
    <property type="project" value="UniProtKB-UniRule"/>
</dbReference>
<dbReference type="GO" id="GO:0016887">
    <property type="term" value="F:ATP hydrolysis activity"/>
    <property type="evidence" value="ECO:0007669"/>
    <property type="project" value="UniProtKB-UniRule"/>
</dbReference>
<dbReference type="GO" id="GO:0004176">
    <property type="term" value="F:ATP-dependent peptidase activity"/>
    <property type="evidence" value="ECO:0007669"/>
    <property type="project" value="InterPro"/>
</dbReference>
<dbReference type="GO" id="GO:0004222">
    <property type="term" value="F:metalloendopeptidase activity"/>
    <property type="evidence" value="ECO:0007669"/>
    <property type="project" value="InterPro"/>
</dbReference>
<dbReference type="GO" id="GO:0008270">
    <property type="term" value="F:zinc ion binding"/>
    <property type="evidence" value="ECO:0007669"/>
    <property type="project" value="UniProtKB-UniRule"/>
</dbReference>
<dbReference type="GO" id="GO:0030163">
    <property type="term" value="P:protein catabolic process"/>
    <property type="evidence" value="ECO:0007669"/>
    <property type="project" value="UniProtKB-UniRule"/>
</dbReference>
<dbReference type="GO" id="GO:0006508">
    <property type="term" value="P:proteolysis"/>
    <property type="evidence" value="ECO:0007669"/>
    <property type="project" value="UniProtKB-KW"/>
</dbReference>
<dbReference type="CDD" id="cd19501">
    <property type="entry name" value="RecA-like_FtsH"/>
    <property type="match status" value="1"/>
</dbReference>
<dbReference type="FunFam" id="1.10.8.60:FF:000001">
    <property type="entry name" value="ATP-dependent zinc metalloprotease FtsH"/>
    <property type="match status" value="1"/>
</dbReference>
<dbReference type="FunFam" id="1.20.58.760:FF:000001">
    <property type="entry name" value="ATP-dependent zinc metalloprotease FtsH"/>
    <property type="match status" value="1"/>
</dbReference>
<dbReference type="FunFam" id="3.40.50.300:FF:000001">
    <property type="entry name" value="ATP-dependent zinc metalloprotease FtsH"/>
    <property type="match status" value="1"/>
</dbReference>
<dbReference type="Gene3D" id="1.10.8.60">
    <property type="match status" value="1"/>
</dbReference>
<dbReference type="Gene3D" id="3.30.720.210">
    <property type="match status" value="1"/>
</dbReference>
<dbReference type="Gene3D" id="3.40.50.300">
    <property type="entry name" value="P-loop containing nucleotide triphosphate hydrolases"/>
    <property type="match status" value="1"/>
</dbReference>
<dbReference type="Gene3D" id="1.20.58.760">
    <property type="entry name" value="Peptidase M41"/>
    <property type="match status" value="1"/>
</dbReference>
<dbReference type="HAMAP" id="MF_01458">
    <property type="entry name" value="FtsH"/>
    <property type="match status" value="1"/>
</dbReference>
<dbReference type="InterPro" id="IPR003593">
    <property type="entry name" value="AAA+_ATPase"/>
</dbReference>
<dbReference type="InterPro" id="IPR041569">
    <property type="entry name" value="AAA_lid_3"/>
</dbReference>
<dbReference type="InterPro" id="IPR003959">
    <property type="entry name" value="ATPase_AAA_core"/>
</dbReference>
<dbReference type="InterPro" id="IPR003960">
    <property type="entry name" value="ATPase_AAA_CS"/>
</dbReference>
<dbReference type="InterPro" id="IPR005936">
    <property type="entry name" value="FtsH"/>
</dbReference>
<dbReference type="InterPro" id="IPR027417">
    <property type="entry name" value="P-loop_NTPase"/>
</dbReference>
<dbReference type="InterPro" id="IPR011546">
    <property type="entry name" value="Pept_M41_FtsH_extracell"/>
</dbReference>
<dbReference type="InterPro" id="IPR000642">
    <property type="entry name" value="Peptidase_M41"/>
</dbReference>
<dbReference type="InterPro" id="IPR037219">
    <property type="entry name" value="Peptidase_M41-like"/>
</dbReference>
<dbReference type="NCBIfam" id="TIGR01241">
    <property type="entry name" value="FtsH_fam"/>
    <property type="match status" value="1"/>
</dbReference>
<dbReference type="PANTHER" id="PTHR23076:SF97">
    <property type="entry name" value="ATP-DEPENDENT ZINC METALLOPROTEASE YME1L1"/>
    <property type="match status" value="1"/>
</dbReference>
<dbReference type="PANTHER" id="PTHR23076">
    <property type="entry name" value="METALLOPROTEASE M41 FTSH"/>
    <property type="match status" value="1"/>
</dbReference>
<dbReference type="Pfam" id="PF00004">
    <property type="entry name" value="AAA"/>
    <property type="match status" value="1"/>
</dbReference>
<dbReference type="Pfam" id="PF17862">
    <property type="entry name" value="AAA_lid_3"/>
    <property type="match status" value="1"/>
</dbReference>
<dbReference type="Pfam" id="PF06480">
    <property type="entry name" value="FtsH_ext"/>
    <property type="match status" value="1"/>
</dbReference>
<dbReference type="Pfam" id="PF01434">
    <property type="entry name" value="Peptidase_M41"/>
    <property type="match status" value="1"/>
</dbReference>
<dbReference type="SMART" id="SM00382">
    <property type="entry name" value="AAA"/>
    <property type="match status" value="1"/>
</dbReference>
<dbReference type="SUPFAM" id="SSF140990">
    <property type="entry name" value="FtsH protease domain-like"/>
    <property type="match status" value="1"/>
</dbReference>
<dbReference type="SUPFAM" id="SSF52540">
    <property type="entry name" value="P-loop containing nucleoside triphosphate hydrolases"/>
    <property type="match status" value="1"/>
</dbReference>
<dbReference type="PROSITE" id="PS00674">
    <property type="entry name" value="AAA"/>
    <property type="match status" value="1"/>
</dbReference>
<feature type="chain" id="PRO_0000400356" description="ATP-dependent zinc metalloprotease FtsH">
    <location>
        <begin position="1"/>
        <end position="637"/>
    </location>
</feature>
<feature type="topological domain" description="Cytoplasmic" evidence="1">
    <location>
        <begin position="1"/>
        <end position="44"/>
    </location>
</feature>
<feature type="transmembrane region" description="Helical" evidence="1">
    <location>
        <begin position="45"/>
        <end position="65"/>
    </location>
</feature>
<feature type="topological domain" description="Periplasmic" evidence="1">
    <location>
        <begin position="66"/>
        <end position="141"/>
    </location>
</feature>
<feature type="transmembrane region" description="Helical" evidence="1">
    <location>
        <begin position="142"/>
        <end position="162"/>
    </location>
</feature>
<feature type="topological domain" description="Cytoplasmic" evidence="1">
    <location>
        <begin position="163"/>
        <end position="637"/>
    </location>
</feature>
<feature type="active site" evidence="1">
    <location>
        <position position="455"/>
    </location>
</feature>
<feature type="binding site" evidence="1">
    <location>
        <begin position="231"/>
        <end position="238"/>
    </location>
    <ligand>
        <name>ATP</name>
        <dbReference type="ChEBI" id="CHEBI:30616"/>
    </ligand>
</feature>
<feature type="binding site" evidence="1">
    <location>
        <position position="454"/>
    </location>
    <ligand>
        <name>Zn(2+)</name>
        <dbReference type="ChEBI" id="CHEBI:29105"/>
        <note>catalytic</note>
    </ligand>
</feature>
<feature type="binding site" evidence="1">
    <location>
        <position position="458"/>
    </location>
    <ligand>
        <name>Zn(2+)</name>
        <dbReference type="ChEBI" id="CHEBI:29105"/>
        <note>catalytic</note>
    </ligand>
</feature>
<feature type="binding site" evidence="1">
    <location>
        <position position="531"/>
    </location>
    <ligand>
        <name>Zn(2+)</name>
        <dbReference type="ChEBI" id="CHEBI:29105"/>
        <note>catalytic</note>
    </ligand>
</feature>
<name>FTSH_METCA</name>
<reference key="1">
    <citation type="journal article" date="2004" name="PLoS Biol.">
        <title>Genomic insights into methanotrophy: the complete genome sequence of Methylococcus capsulatus (Bath).</title>
        <authorList>
            <person name="Ward N.L."/>
            <person name="Larsen O."/>
            <person name="Sakwa J."/>
            <person name="Bruseth L."/>
            <person name="Khouri H.M."/>
            <person name="Durkin A.S."/>
            <person name="Dimitrov G."/>
            <person name="Jiang L."/>
            <person name="Scanlan D."/>
            <person name="Kang K.H."/>
            <person name="Lewis M.R."/>
            <person name="Nelson K.E."/>
            <person name="Methe B.A."/>
            <person name="Wu M."/>
            <person name="Heidelberg J.F."/>
            <person name="Paulsen I.T."/>
            <person name="Fouts D.E."/>
            <person name="Ravel J."/>
            <person name="Tettelin H."/>
            <person name="Ren Q."/>
            <person name="Read T.D."/>
            <person name="DeBoy R.T."/>
            <person name="Seshadri R."/>
            <person name="Salzberg S.L."/>
            <person name="Jensen H.B."/>
            <person name="Birkeland N.K."/>
            <person name="Nelson W.C."/>
            <person name="Dodson R.J."/>
            <person name="Grindhaug S.H."/>
            <person name="Holt I.E."/>
            <person name="Eidhammer I."/>
            <person name="Jonasen I."/>
            <person name="Vanaken S."/>
            <person name="Utterback T.R."/>
            <person name="Feldblyum T.V."/>
            <person name="Fraser C.M."/>
            <person name="Lillehaug J.R."/>
            <person name="Eisen J.A."/>
        </authorList>
    </citation>
    <scope>NUCLEOTIDE SEQUENCE [LARGE SCALE GENOMIC DNA]</scope>
    <source>
        <strain>ATCC 33009 / NCIMB 11132 / Bath</strain>
    </source>
</reference>
<comment type="function">
    <text evidence="1">Acts as a processive, ATP-dependent zinc metallopeptidase for both cytoplasmic and membrane proteins. Plays a role in the quality control of integral membrane proteins.</text>
</comment>
<comment type="cofactor">
    <cofactor evidence="1">
        <name>Zn(2+)</name>
        <dbReference type="ChEBI" id="CHEBI:29105"/>
    </cofactor>
    <text evidence="1">Binds 1 zinc ion per subunit.</text>
</comment>
<comment type="subunit">
    <text evidence="1">Homohexamer.</text>
</comment>
<comment type="subcellular location">
    <subcellularLocation>
        <location evidence="1">Cell inner membrane</location>
        <topology evidence="1">Multi-pass membrane protein</topology>
        <orientation evidence="1">Cytoplasmic side</orientation>
    </subcellularLocation>
</comment>
<comment type="similarity">
    <text evidence="1">In the central section; belongs to the AAA ATPase family.</text>
</comment>
<comment type="similarity">
    <text evidence="1">In the C-terminal section; belongs to the peptidase M41 family.</text>
</comment>
<organism>
    <name type="scientific">Methylococcus capsulatus (strain ATCC 33009 / NCIMB 11132 / Bath)</name>
    <dbReference type="NCBI Taxonomy" id="243233"/>
    <lineage>
        <taxon>Bacteria</taxon>
        <taxon>Pseudomonadati</taxon>
        <taxon>Pseudomonadota</taxon>
        <taxon>Gammaproteobacteria</taxon>
        <taxon>Methylococcales</taxon>
        <taxon>Methylococcaceae</taxon>
        <taxon>Methylococcus</taxon>
    </lineage>
</organism>
<keyword id="KW-0067">ATP-binding</keyword>
<keyword id="KW-0997">Cell inner membrane</keyword>
<keyword id="KW-1003">Cell membrane</keyword>
<keyword id="KW-0378">Hydrolase</keyword>
<keyword id="KW-0472">Membrane</keyword>
<keyword id="KW-0479">Metal-binding</keyword>
<keyword id="KW-0482">Metalloprotease</keyword>
<keyword id="KW-0547">Nucleotide-binding</keyword>
<keyword id="KW-0645">Protease</keyword>
<keyword id="KW-1185">Reference proteome</keyword>
<keyword id="KW-0812">Transmembrane</keyword>
<keyword id="KW-1133">Transmembrane helix</keyword>
<keyword id="KW-0862">Zinc</keyword>
<evidence type="ECO:0000255" key="1">
    <source>
        <dbReference type="HAMAP-Rule" id="MF_01458"/>
    </source>
</evidence>
<protein>
    <recommendedName>
        <fullName evidence="1">ATP-dependent zinc metalloprotease FtsH</fullName>
        <ecNumber evidence="1">3.4.24.-</ecNumber>
    </recommendedName>
</protein>
<gene>
    <name evidence="1" type="primary">ftsH</name>
    <name type="ordered locus">MCA0851</name>
</gene>
<accession>Q60AK1</accession>
<proteinExistence type="inferred from homology"/>